<name>UBIG_BARQU</name>
<organism>
    <name type="scientific">Bartonella quintana (strain Toulouse)</name>
    <name type="common">Rochalimaea quintana</name>
    <dbReference type="NCBI Taxonomy" id="283165"/>
    <lineage>
        <taxon>Bacteria</taxon>
        <taxon>Pseudomonadati</taxon>
        <taxon>Pseudomonadota</taxon>
        <taxon>Alphaproteobacteria</taxon>
        <taxon>Hyphomicrobiales</taxon>
        <taxon>Bartonellaceae</taxon>
        <taxon>Bartonella</taxon>
    </lineage>
</organism>
<reference key="1">
    <citation type="journal article" date="2004" name="Proc. Natl. Acad. Sci. U.S.A.">
        <title>The louse-borne human pathogen Bartonella quintana is a genomic derivative of the zoonotic agent Bartonella henselae.</title>
        <authorList>
            <person name="Alsmark U.C.M."/>
            <person name="Frank A.C."/>
            <person name="Karlberg E.O."/>
            <person name="Legault B.-A."/>
            <person name="Ardell D.H."/>
            <person name="Canbaeck B."/>
            <person name="Eriksson A.-S."/>
            <person name="Naeslund A.K."/>
            <person name="Handley S.A."/>
            <person name="Huvet M."/>
            <person name="La Scola B."/>
            <person name="Holmberg M."/>
            <person name="Andersson S.G.E."/>
        </authorList>
    </citation>
    <scope>NUCLEOTIDE SEQUENCE [LARGE SCALE GENOMIC DNA]</scope>
    <source>
        <strain>Toulouse</strain>
    </source>
</reference>
<feature type="chain" id="PRO_0000193367" description="Ubiquinone biosynthesis O-methyltransferase">
    <location>
        <begin position="1"/>
        <end position="247"/>
    </location>
</feature>
<feature type="binding site" evidence="1">
    <location>
        <position position="41"/>
    </location>
    <ligand>
        <name>S-adenosyl-L-methionine</name>
        <dbReference type="ChEBI" id="CHEBI:59789"/>
    </ligand>
</feature>
<feature type="binding site" evidence="1">
    <location>
        <position position="72"/>
    </location>
    <ligand>
        <name>S-adenosyl-L-methionine</name>
        <dbReference type="ChEBI" id="CHEBI:59789"/>
    </ligand>
</feature>
<feature type="binding site" evidence="1">
    <location>
        <position position="93"/>
    </location>
    <ligand>
        <name>S-adenosyl-L-methionine</name>
        <dbReference type="ChEBI" id="CHEBI:59789"/>
    </ligand>
</feature>
<feature type="binding site" evidence="1">
    <location>
        <position position="136"/>
    </location>
    <ligand>
        <name>S-adenosyl-L-methionine</name>
        <dbReference type="ChEBI" id="CHEBI:59789"/>
    </ligand>
</feature>
<dbReference type="EC" id="2.1.1.222" evidence="1"/>
<dbReference type="EC" id="2.1.1.64" evidence="1"/>
<dbReference type="EMBL" id="BX897700">
    <property type="protein sequence ID" value="CAF25805.1"/>
    <property type="molecule type" value="Genomic_DNA"/>
</dbReference>
<dbReference type="RefSeq" id="WP_011179102.1">
    <property type="nucleotide sequence ID" value="NC_005955.1"/>
</dbReference>
<dbReference type="SMR" id="Q6G0I1"/>
<dbReference type="KEGG" id="bqu:BQ03050"/>
<dbReference type="eggNOG" id="COG2227">
    <property type="taxonomic scope" value="Bacteria"/>
</dbReference>
<dbReference type="HOGENOM" id="CLU_042432_0_0_5"/>
<dbReference type="OrthoDB" id="9801538at2"/>
<dbReference type="UniPathway" id="UPA00232"/>
<dbReference type="Proteomes" id="UP000000597">
    <property type="component" value="Chromosome"/>
</dbReference>
<dbReference type="GO" id="GO:0102208">
    <property type="term" value="F:2-polyprenyl-6-hydroxyphenol methylase activity"/>
    <property type="evidence" value="ECO:0007669"/>
    <property type="project" value="UniProtKB-EC"/>
</dbReference>
<dbReference type="GO" id="GO:0061542">
    <property type="term" value="F:3-demethylubiquinol 3-O-methyltransferase activity"/>
    <property type="evidence" value="ECO:0007669"/>
    <property type="project" value="UniProtKB-UniRule"/>
</dbReference>
<dbReference type="GO" id="GO:0010420">
    <property type="term" value="F:polyprenyldihydroxybenzoate methyltransferase activity"/>
    <property type="evidence" value="ECO:0007669"/>
    <property type="project" value="InterPro"/>
</dbReference>
<dbReference type="GO" id="GO:0032259">
    <property type="term" value="P:methylation"/>
    <property type="evidence" value="ECO:0007669"/>
    <property type="project" value="UniProtKB-KW"/>
</dbReference>
<dbReference type="CDD" id="cd02440">
    <property type="entry name" value="AdoMet_MTases"/>
    <property type="match status" value="1"/>
</dbReference>
<dbReference type="Gene3D" id="3.40.50.150">
    <property type="entry name" value="Vaccinia Virus protein VP39"/>
    <property type="match status" value="1"/>
</dbReference>
<dbReference type="HAMAP" id="MF_00472">
    <property type="entry name" value="UbiG"/>
    <property type="match status" value="1"/>
</dbReference>
<dbReference type="InterPro" id="IPR029063">
    <property type="entry name" value="SAM-dependent_MTases_sf"/>
</dbReference>
<dbReference type="InterPro" id="IPR010233">
    <property type="entry name" value="UbiG_MeTrfase"/>
</dbReference>
<dbReference type="NCBIfam" id="TIGR01983">
    <property type="entry name" value="UbiG"/>
    <property type="match status" value="1"/>
</dbReference>
<dbReference type="PANTHER" id="PTHR43464">
    <property type="entry name" value="METHYLTRANSFERASE"/>
    <property type="match status" value="1"/>
</dbReference>
<dbReference type="PANTHER" id="PTHR43464:SF19">
    <property type="entry name" value="UBIQUINONE BIOSYNTHESIS O-METHYLTRANSFERASE, MITOCHONDRIAL"/>
    <property type="match status" value="1"/>
</dbReference>
<dbReference type="Pfam" id="PF13489">
    <property type="entry name" value="Methyltransf_23"/>
    <property type="match status" value="1"/>
</dbReference>
<dbReference type="SUPFAM" id="SSF53335">
    <property type="entry name" value="S-adenosyl-L-methionine-dependent methyltransferases"/>
    <property type="match status" value="1"/>
</dbReference>
<protein>
    <recommendedName>
        <fullName evidence="1">Ubiquinone biosynthesis O-methyltransferase</fullName>
    </recommendedName>
    <alternativeName>
        <fullName evidence="1">2-polyprenyl-6-hydroxyphenol methylase</fullName>
        <ecNumber evidence="1">2.1.1.222</ecNumber>
    </alternativeName>
    <alternativeName>
        <fullName evidence="1">3-demethylubiquinone 3-O-methyltransferase</fullName>
        <ecNumber evidence="1">2.1.1.64</ecNumber>
    </alternativeName>
</protein>
<evidence type="ECO:0000255" key="1">
    <source>
        <dbReference type="HAMAP-Rule" id="MF_00472"/>
    </source>
</evidence>
<accession>Q6G0I1</accession>
<keyword id="KW-0489">Methyltransferase</keyword>
<keyword id="KW-0949">S-adenosyl-L-methionine</keyword>
<keyword id="KW-0808">Transferase</keyword>
<keyword id="KW-0831">Ubiquinone biosynthesis</keyword>
<sequence length="247" mass="27965">MMNETRTTIDQDEIDRFSRIAAEWWNPKGKFRPLHQLNPTRLAYIREKICLAFNRDPVSLMPFENLKILDIGCGGGLLCEPMARLGAMVVGVDAAQTNIEVAKLHATQSDLSIDYRTTIAEALADKGEKFDIILNMEVVEHVADVNLFIAATAKMLKSQGVMFVSTLNRTWKAWGLAIVGAEYILRWLPKGTHDYKKFLKPQELKNLLSKNALTVIDEIGITYNPVNDSWNRSKDMDVNYLLLAKRP</sequence>
<comment type="function">
    <text evidence="1">O-methyltransferase that catalyzes the 2 O-methylation steps in the ubiquinone biosynthetic pathway.</text>
</comment>
<comment type="catalytic activity">
    <reaction evidence="1">
        <text>a 3-demethylubiquinol + S-adenosyl-L-methionine = a ubiquinol + S-adenosyl-L-homocysteine + H(+)</text>
        <dbReference type="Rhea" id="RHEA:44380"/>
        <dbReference type="Rhea" id="RHEA-COMP:9566"/>
        <dbReference type="Rhea" id="RHEA-COMP:10914"/>
        <dbReference type="ChEBI" id="CHEBI:15378"/>
        <dbReference type="ChEBI" id="CHEBI:17976"/>
        <dbReference type="ChEBI" id="CHEBI:57856"/>
        <dbReference type="ChEBI" id="CHEBI:59789"/>
        <dbReference type="ChEBI" id="CHEBI:84422"/>
        <dbReference type="EC" id="2.1.1.64"/>
    </reaction>
</comment>
<comment type="catalytic activity">
    <reaction evidence="1">
        <text>a 3-(all-trans-polyprenyl)benzene-1,2-diol + S-adenosyl-L-methionine = a 2-methoxy-6-(all-trans-polyprenyl)phenol + S-adenosyl-L-homocysteine + H(+)</text>
        <dbReference type="Rhea" id="RHEA:31411"/>
        <dbReference type="Rhea" id="RHEA-COMP:9550"/>
        <dbReference type="Rhea" id="RHEA-COMP:9551"/>
        <dbReference type="ChEBI" id="CHEBI:15378"/>
        <dbReference type="ChEBI" id="CHEBI:57856"/>
        <dbReference type="ChEBI" id="CHEBI:59789"/>
        <dbReference type="ChEBI" id="CHEBI:62729"/>
        <dbReference type="ChEBI" id="CHEBI:62731"/>
        <dbReference type="EC" id="2.1.1.222"/>
    </reaction>
</comment>
<comment type="pathway">
    <text evidence="1">Cofactor biosynthesis; ubiquinone biosynthesis.</text>
</comment>
<comment type="similarity">
    <text evidence="1">Belongs to the methyltransferase superfamily. UbiG/COQ3 family.</text>
</comment>
<gene>
    <name evidence="1" type="primary">ubiG</name>
    <name type="ordered locus">BQ03050</name>
</gene>
<proteinExistence type="inferred from homology"/>